<comment type="function">
    <text evidence="1">Responsible for the transport of C4-dicarboxylates during anaerobic growth. Catalyzes the uptake of fumarate coupled to the export of succinate.</text>
</comment>
<comment type="catalytic activity">
    <reaction evidence="1">
        <text>fumarate(in) + succinate(out) = fumarate(out) + succinate(in)</text>
        <dbReference type="Rhea" id="RHEA:29323"/>
        <dbReference type="ChEBI" id="CHEBI:29806"/>
        <dbReference type="ChEBI" id="CHEBI:30031"/>
    </reaction>
    <physiologicalReaction direction="right-to-left" evidence="1">
        <dbReference type="Rhea" id="RHEA:29325"/>
    </physiologicalReaction>
</comment>
<comment type="subcellular location">
    <subcellularLocation>
        <location evidence="1">Cell inner membrane</location>
        <topology evidence="2">Multi-pass membrane protein</topology>
    </subcellularLocation>
</comment>
<comment type="similarity">
    <text evidence="3">Belongs to the DcuC/DcuD transporter (TC 2.A.61) family.</text>
</comment>
<feature type="chain" id="PRO_0000201630" description="Anaerobic C4-dicarboxylate transporter DcuC">
    <location>
        <begin position="1"/>
        <end position="461"/>
    </location>
</feature>
<feature type="transmembrane region" description="Helical" evidence="2">
    <location>
        <begin position="2"/>
        <end position="22"/>
    </location>
</feature>
<feature type="transmembrane region" description="Helical" evidence="2">
    <location>
        <begin position="26"/>
        <end position="46"/>
    </location>
</feature>
<feature type="transmembrane region" description="Helical" evidence="2">
    <location>
        <begin position="79"/>
        <end position="99"/>
    </location>
</feature>
<feature type="transmembrane region" description="Helical" evidence="2">
    <location>
        <begin position="116"/>
        <end position="136"/>
    </location>
</feature>
<feature type="transmembrane region" description="Helical" evidence="2">
    <location>
        <begin position="137"/>
        <end position="157"/>
    </location>
</feature>
<feature type="transmembrane region" description="Helical" evidence="2">
    <location>
        <begin position="164"/>
        <end position="184"/>
    </location>
</feature>
<feature type="transmembrane region" description="Helical" evidence="2">
    <location>
        <begin position="199"/>
        <end position="219"/>
    </location>
</feature>
<feature type="transmembrane region" description="Helical" evidence="2">
    <location>
        <begin position="240"/>
        <end position="260"/>
    </location>
</feature>
<feature type="transmembrane region" description="Helical" evidence="2">
    <location>
        <begin position="267"/>
        <end position="287"/>
    </location>
</feature>
<feature type="transmembrane region" description="Helical" evidence="2">
    <location>
        <begin position="313"/>
        <end position="333"/>
    </location>
</feature>
<feature type="transmembrane region" description="Helical" evidence="2">
    <location>
        <begin position="343"/>
        <end position="363"/>
    </location>
</feature>
<feature type="transmembrane region" description="Helical" evidence="2">
    <location>
        <begin position="436"/>
        <end position="456"/>
    </location>
</feature>
<reference key="1">
    <citation type="journal article" date="2002" name="Nucleic Acids Res.">
        <title>Genome sequence of Shigella flexneri 2a: insights into pathogenicity through comparison with genomes of Escherichia coli K12 and O157.</title>
        <authorList>
            <person name="Jin Q."/>
            <person name="Yuan Z."/>
            <person name="Xu J."/>
            <person name="Wang Y."/>
            <person name="Shen Y."/>
            <person name="Lu W."/>
            <person name="Wang J."/>
            <person name="Liu H."/>
            <person name="Yang J."/>
            <person name="Yang F."/>
            <person name="Zhang X."/>
            <person name="Zhang J."/>
            <person name="Yang G."/>
            <person name="Wu H."/>
            <person name="Qu D."/>
            <person name="Dong J."/>
            <person name="Sun L."/>
            <person name="Xue Y."/>
            <person name="Zhao A."/>
            <person name="Gao Y."/>
            <person name="Zhu J."/>
            <person name="Kan B."/>
            <person name="Ding K."/>
            <person name="Chen S."/>
            <person name="Cheng H."/>
            <person name="Yao Z."/>
            <person name="He B."/>
            <person name="Chen R."/>
            <person name="Ma D."/>
            <person name="Qiang B."/>
            <person name="Wen Y."/>
            <person name="Hou Y."/>
            <person name="Yu J."/>
        </authorList>
    </citation>
    <scope>NUCLEOTIDE SEQUENCE [LARGE SCALE GENOMIC DNA]</scope>
    <source>
        <strain>301 / Serotype 2a</strain>
    </source>
</reference>
<reference key="2">
    <citation type="journal article" date="2003" name="Infect. Immun.">
        <title>Complete genome sequence and comparative genomics of Shigella flexneri serotype 2a strain 2457T.</title>
        <authorList>
            <person name="Wei J."/>
            <person name="Goldberg M.B."/>
            <person name="Burland V."/>
            <person name="Venkatesan M.M."/>
            <person name="Deng W."/>
            <person name="Fournier G."/>
            <person name="Mayhew G.F."/>
            <person name="Plunkett G. III"/>
            <person name="Rose D.J."/>
            <person name="Darling A."/>
            <person name="Mau B."/>
            <person name="Perna N.T."/>
            <person name="Payne S.M."/>
            <person name="Runyen-Janecky L.J."/>
            <person name="Zhou S."/>
            <person name="Schwartz D.C."/>
            <person name="Blattner F.R."/>
        </authorList>
    </citation>
    <scope>NUCLEOTIDE SEQUENCE [LARGE SCALE GENOMIC DNA]</scope>
    <source>
        <strain>ATCC 700930 / 2457T / Serotype 2a</strain>
    </source>
</reference>
<proteinExistence type="inferred from homology"/>
<gene>
    <name type="primary">dcuC</name>
    <name type="ordered locus">SF0659</name>
    <name type="ordered locus">S0682</name>
</gene>
<sequence length="461" mass="48412">MLTFIELLIGVVVIVGVARYIIKGYSATGVLFVGGLLLLIISAIMGHKVLPSSQASTGYSATDIVEYVKILLMSRGGDLGMMIMMLCGFAAYMTHIGANDMVVKLASKPLQYINSPYLLMIAAYFVACLMSLAVSSATGLGVLLMATLFPVMVNVGISRGAAAAICASPAAIILAPTSGDVVLAAQASEMSLIDFAFKTTLPISIAAIIGMAIAHFFWQRYLDKKEHISHEMLDVSEITTTAPAFYAILPFTPIIGVLIFDGKWGPQLHIITILVICMLIASILEFLRSFNTQKVFSGLEVAYRGMADAFANVVMLLVAAGVFAQGLSTIGFIQSLISIATSFGSASIILMLVLVILTMLAAVTTGSGNAPFYAFVEMIPKLAHSSGINPAYLTIPMLQASNLGRTLSPVSGVVVAVAGMAKISPFEVVKRTSVPVLVGLVIVIVATELMVPGTAAAVTGK</sequence>
<evidence type="ECO:0000250" key="1">
    <source>
        <dbReference type="UniProtKB" id="P0ABP3"/>
    </source>
</evidence>
<evidence type="ECO:0000255" key="2"/>
<evidence type="ECO:0000305" key="3"/>
<dbReference type="EMBL" id="AE005674">
    <property type="protein sequence ID" value="AAN42295.2"/>
    <property type="molecule type" value="Genomic_DNA"/>
</dbReference>
<dbReference type="EMBL" id="AE014073">
    <property type="protein sequence ID" value="AAP16166.1"/>
    <property type="molecule type" value="Genomic_DNA"/>
</dbReference>
<dbReference type="RefSeq" id="NP_706588.2">
    <property type="nucleotide sequence ID" value="NC_004337.2"/>
</dbReference>
<dbReference type="RefSeq" id="WP_000955063.1">
    <property type="nucleotide sequence ID" value="NZ_WPGU01000330.1"/>
</dbReference>
<dbReference type="SMR" id="P0ABP5"/>
<dbReference type="STRING" id="198214.SF0659"/>
<dbReference type="PaxDb" id="198214-SF0659"/>
<dbReference type="GeneID" id="1023658"/>
<dbReference type="GeneID" id="75205017"/>
<dbReference type="KEGG" id="sfl:SF0659"/>
<dbReference type="KEGG" id="sfx:S0682"/>
<dbReference type="PATRIC" id="fig|198214.7.peg.766"/>
<dbReference type="HOGENOM" id="CLU_030262_3_2_6"/>
<dbReference type="Proteomes" id="UP000001006">
    <property type="component" value="Chromosome"/>
</dbReference>
<dbReference type="Proteomes" id="UP000002673">
    <property type="component" value="Chromosome"/>
</dbReference>
<dbReference type="GO" id="GO:0005886">
    <property type="term" value="C:plasma membrane"/>
    <property type="evidence" value="ECO:0007669"/>
    <property type="project" value="UniProtKB-SubCell"/>
</dbReference>
<dbReference type="GO" id="GO:0015297">
    <property type="term" value="F:antiporter activity"/>
    <property type="evidence" value="ECO:0007669"/>
    <property type="project" value="UniProtKB-KW"/>
</dbReference>
<dbReference type="GO" id="GO:0015556">
    <property type="term" value="F:C4-dicarboxylate transmembrane transporter activity"/>
    <property type="evidence" value="ECO:0007669"/>
    <property type="project" value="InterPro"/>
</dbReference>
<dbReference type="InterPro" id="IPR004669">
    <property type="entry name" value="C4_dicarb_anaerob_car"/>
</dbReference>
<dbReference type="InterPro" id="IPR018385">
    <property type="entry name" value="C4_dicarb_anaerob_car-like"/>
</dbReference>
<dbReference type="NCBIfam" id="TIGR00771">
    <property type="entry name" value="DcuC"/>
    <property type="match status" value="1"/>
</dbReference>
<dbReference type="NCBIfam" id="NF037994">
    <property type="entry name" value="DcuC_1"/>
    <property type="match status" value="1"/>
</dbReference>
<dbReference type="NCBIfam" id="NF007937">
    <property type="entry name" value="PRK10654.1"/>
    <property type="match status" value="1"/>
</dbReference>
<dbReference type="PANTHER" id="PTHR42002">
    <property type="entry name" value="ANAEROBIC C4-DICARBOXYLATE TRANSPORTER DCUC-RELATED"/>
    <property type="match status" value="1"/>
</dbReference>
<dbReference type="PANTHER" id="PTHR42002:SF2">
    <property type="entry name" value="ANAEROBIC C4-DICARBOXYLATE TRANSPORTER DCUC-RELATED"/>
    <property type="match status" value="1"/>
</dbReference>
<dbReference type="Pfam" id="PF03606">
    <property type="entry name" value="DcuC"/>
    <property type="match status" value="1"/>
</dbReference>
<keyword id="KW-0050">Antiport</keyword>
<keyword id="KW-0997">Cell inner membrane</keyword>
<keyword id="KW-1003">Cell membrane</keyword>
<keyword id="KW-0472">Membrane</keyword>
<keyword id="KW-1185">Reference proteome</keyword>
<keyword id="KW-0812">Transmembrane</keyword>
<keyword id="KW-1133">Transmembrane helix</keyword>
<keyword id="KW-0813">Transport</keyword>
<accession>P0ABP5</accession>
<accession>Q47134</accession>
<accession>Q9ZBC9</accession>
<accession>Q9ZBD0</accession>
<protein>
    <recommendedName>
        <fullName evidence="1">Anaerobic C4-dicarboxylate transporter DcuC</fullName>
    </recommendedName>
</protein>
<name>DCUC_SHIFL</name>
<organism>
    <name type="scientific">Shigella flexneri</name>
    <dbReference type="NCBI Taxonomy" id="623"/>
    <lineage>
        <taxon>Bacteria</taxon>
        <taxon>Pseudomonadati</taxon>
        <taxon>Pseudomonadota</taxon>
        <taxon>Gammaproteobacteria</taxon>
        <taxon>Enterobacterales</taxon>
        <taxon>Enterobacteriaceae</taxon>
        <taxon>Shigella</taxon>
    </lineage>
</organism>